<dbReference type="EC" id="6.1.1.12" evidence="1"/>
<dbReference type="EMBL" id="CU928161">
    <property type="protein sequence ID" value="CAR03227.1"/>
    <property type="molecule type" value="Genomic_DNA"/>
</dbReference>
<dbReference type="RefSeq" id="WP_001258675.1">
    <property type="nucleotide sequence ID" value="NC_011742.1"/>
</dbReference>
<dbReference type="SMR" id="B7MBS5"/>
<dbReference type="KEGG" id="ecz:ECS88_1924"/>
<dbReference type="HOGENOM" id="CLU_014330_3_2_6"/>
<dbReference type="Proteomes" id="UP000000747">
    <property type="component" value="Chromosome"/>
</dbReference>
<dbReference type="GO" id="GO:0005737">
    <property type="term" value="C:cytoplasm"/>
    <property type="evidence" value="ECO:0007669"/>
    <property type="project" value="UniProtKB-SubCell"/>
</dbReference>
<dbReference type="GO" id="GO:0004815">
    <property type="term" value="F:aspartate-tRNA ligase activity"/>
    <property type="evidence" value="ECO:0007669"/>
    <property type="project" value="UniProtKB-UniRule"/>
</dbReference>
<dbReference type="GO" id="GO:0005524">
    <property type="term" value="F:ATP binding"/>
    <property type="evidence" value="ECO:0007669"/>
    <property type="project" value="UniProtKB-UniRule"/>
</dbReference>
<dbReference type="GO" id="GO:0003676">
    <property type="term" value="F:nucleic acid binding"/>
    <property type="evidence" value="ECO:0007669"/>
    <property type="project" value="InterPro"/>
</dbReference>
<dbReference type="GO" id="GO:0006422">
    <property type="term" value="P:aspartyl-tRNA aminoacylation"/>
    <property type="evidence" value="ECO:0007669"/>
    <property type="project" value="UniProtKB-UniRule"/>
</dbReference>
<dbReference type="CDD" id="cd00777">
    <property type="entry name" value="AspRS_core"/>
    <property type="match status" value="1"/>
</dbReference>
<dbReference type="CDD" id="cd04317">
    <property type="entry name" value="EcAspRS_like_N"/>
    <property type="match status" value="1"/>
</dbReference>
<dbReference type="FunFam" id="2.40.50.140:FF:000080">
    <property type="entry name" value="Aspartate--tRNA ligase"/>
    <property type="match status" value="1"/>
</dbReference>
<dbReference type="FunFam" id="3.30.1360.30:FF:000001">
    <property type="entry name" value="Aspartate--tRNA ligase"/>
    <property type="match status" value="1"/>
</dbReference>
<dbReference type="Gene3D" id="3.30.930.10">
    <property type="entry name" value="Bira Bifunctional Protein, Domain 2"/>
    <property type="match status" value="1"/>
</dbReference>
<dbReference type="Gene3D" id="3.30.1360.30">
    <property type="entry name" value="GAD-like domain"/>
    <property type="match status" value="1"/>
</dbReference>
<dbReference type="Gene3D" id="2.40.50.140">
    <property type="entry name" value="Nucleic acid-binding proteins"/>
    <property type="match status" value="1"/>
</dbReference>
<dbReference type="HAMAP" id="MF_00044">
    <property type="entry name" value="Asp_tRNA_synth_type1"/>
    <property type="match status" value="1"/>
</dbReference>
<dbReference type="InterPro" id="IPR004364">
    <property type="entry name" value="Aa-tRNA-synt_II"/>
</dbReference>
<dbReference type="InterPro" id="IPR006195">
    <property type="entry name" value="aa-tRNA-synth_II"/>
</dbReference>
<dbReference type="InterPro" id="IPR045864">
    <property type="entry name" value="aa-tRNA-synth_II/BPL/LPL"/>
</dbReference>
<dbReference type="InterPro" id="IPR004524">
    <property type="entry name" value="Asp-tRNA-ligase_1"/>
</dbReference>
<dbReference type="InterPro" id="IPR047089">
    <property type="entry name" value="Asp-tRNA-ligase_1_N"/>
</dbReference>
<dbReference type="InterPro" id="IPR002312">
    <property type="entry name" value="Asp/Asn-tRNA-synth_IIb"/>
</dbReference>
<dbReference type="InterPro" id="IPR047090">
    <property type="entry name" value="AspRS_core"/>
</dbReference>
<dbReference type="InterPro" id="IPR004115">
    <property type="entry name" value="GAD-like_sf"/>
</dbReference>
<dbReference type="InterPro" id="IPR029351">
    <property type="entry name" value="GAD_dom"/>
</dbReference>
<dbReference type="InterPro" id="IPR012340">
    <property type="entry name" value="NA-bd_OB-fold"/>
</dbReference>
<dbReference type="InterPro" id="IPR004365">
    <property type="entry name" value="NA-bd_OB_tRNA"/>
</dbReference>
<dbReference type="NCBIfam" id="TIGR00459">
    <property type="entry name" value="aspS_bact"/>
    <property type="match status" value="1"/>
</dbReference>
<dbReference type="NCBIfam" id="NF001750">
    <property type="entry name" value="PRK00476.1"/>
    <property type="match status" value="1"/>
</dbReference>
<dbReference type="PANTHER" id="PTHR22594:SF5">
    <property type="entry name" value="ASPARTATE--TRNA LIGASE, MITOCHONDRIAL"/>
    <property type="match status" value="1"/>
</dbReference>
<dbReference type="PANTHER" id="PTHR22594">
    <property type="entry name" value="ASPARTYL/LYSYL-TRNA SYNTHETASE"/>
    <property type="match status" value="1"/>
</dbReference>
<dbReference type="Pfam" id="PF02938">
    <property type="entry name" value="GAD"/>
    <property type="match status" value="1"/>
</dbReference>
<dbReference type="Pfam" id="PF00152">
    <property type="entry name" value="tRNA-synt_2"/>
    <property type="match status" value="1"/>
</dbReference>
<dbReference type="Pfam" id="PF01336">
    <property type="entry name" value="tRNA_anti-codon"/>
    <property type="match status" value="1"/>
</dbReference>
<dbReference type="PRINTS" id="PR01042">
    <property type="entry name" value="TRNASYNTHASP"/>
</dbReference>
<dbReference type="SUPFAM" id="SSF55681">
    <property type="entry name" value="Class II aaRS and biotin synthetases"/>
    <property type="match status" value="1"/>
</dbReference>
<dbReference type="SUPFAM" id="SSF55261">
    <property type="entry name" value="GAD domain-like"/>
    <property type="match status" value="1"/>
</dbReference>
<dbReference type="SUPFAM" id="SSF50249">
    <property type="entry name" value="Nucleic acid-binding proteins"/>
    <property type="match status" value="1"/>
</dbReference>
<dbReference type="PROSITE" id="PS50862">
    <property type="entry name" value="AA_TRNA_LIGASE_II"/>
    <property type="match status" value="1"/>
</dbReference>
<comment type="function">
    <text evidence="1">Catalyzes the attachment of L-aspartate to tRNA(Asp) in a two-step reaction: L-aspartate is first activated by ATP to form Asp-AMP and then transferred to the acceptor end of tRNA(Asp).</text>
</comment>
<comment type="catalytic activity">
    <reaction evidence="1">
        <text>tRNA(Asp) + L-aspartate + ATP = L-aspartyl-tRNA(Asp) + AMP + diphosphate</text>
        <dbReference type="Rhea" id="RHEA:19649"/>
        <dbReference type="Rhea" id="RHEA-COMP:9660"/>
        <dbReference type="Rhea" id="RHEA-COMP:9678"/>
        <dbReference type="ChEBI" id="CHEBI:29991"/>
        <dbReference type="ChEBI" id="CHEBI:30616"/>
        <dbReference type="ChEBI" id="CHEBI:33019"/>
        <dbReference type="ChEBI" id="CHEBI:78442"/>
        <dbReference type="ChEBI" id="CHEBI:78516"/>
        <dbReference type="ChEBI" id="CHEBI:456215"/>
        <dbReference type="EC" id="6.1.1.12"/>
    </reaction>
</comment>
<comment type="subunit">
    <text evidence="1">Homodimer.</text>
</comment>
<comment type="subcellular location">
    <subcellularLocation>
        <location evidence="1">Cytoplasm</location>
    </subcellularLocation>
</comment>
<comment type="similarity">
    <text evidence="1">Belongs to the class-II aminoacyl-tRNA synthetase family. Type 1 subfamily.</text>
</comment>
<proteinExistence type="inferred from homology"/>
<sequence length="590" mass="65869">MRTEYCGQLRLSHVGQQVTLCGWVNRRRDLGSLIFIDMRDREGIVQVFFDPDRADALKLASELRNEFCIQVTGTVRARDEKNINRDMATGEIEVLASSLTIINRADVLPLDSNHVNTEEARLKYRYLDLRRPEMAQRLKTRAKITSLVRRFMDDHGFLDIETPMLTKATPEGARDYLVPSRVHKGKFYALPQSPQLFKQLLMMSGFDRYYQIVKCFRDEDLRADRQPEFTQIDVETSFMTAPQVREVMEALVRHLWLEVKGVDLGDFPVMTFAEAERRYGSDKPDLRNPMELTDVADLLKSVEFAVFAGPANDPKGRVAALRVPGGASLTRKQIDEYGNFVKIYGAKGLAYIKVNERAKGLEGINSPVAKFLNAEIIEAILERTGAQDGDMIFFGADNKKIVADAMGALRLKVGKDLGLTDESKWAPLWVIDFPMFEDDGEGGLTAMHHPFTSPKDMTAAELKAAPENAVANAYDMVINGYEVGGGSVRIHNGDMQQTVFGILGINEEEQREKFGFLLDALKYGTPPHAGLAFGLDRLTMLLTGTDNIRDVIAFPKTTAAACLMTEAPSFANPTALAELSIQVVKKAENN</sequence>
<name>SYD_ECO45</name>
<protein>
    <recommendedName>
        <fullName evidence="1">Aspartate--tRNA ligase</fullName>
        <ecNumber evidence="1">6.1.1.12</ecNumber>
    </recommendedName>
    <alternativeName>
        <fullName evidence="1">Aspartyl-tRNA synthetase</fullName>
        <shortName evidence="1">AspRS</shortName>
    </alternativeName>
</protein>
<gene>
    <name evidence="1" type="primary">aspS</name>
    <name type="ordered locus">ECS88_1924</name>
</gene>
<keyword id="KW-0030">Aminoacyl-tRNA synthetase</keyword>
<keyword id="KW-0067">ATP-binding</keyword>
<keyword id="KW-0963">Cytoplasm</keyword>
<keyword id="KW-0436">Ligase</keyword>
<keyword id="KW-0547">Nucleotide-binding</keyword>
<keyword id="KW-0648">Protein biosynthesis</keyword>
<keyword id="KW-1185">Reference proteome</keyword>
<evidence type="ECO:0000255" key="1">
    <source>
        <dbReference type="HAMAP-Rule" id="MF_00044"/>
    </source>
</evidence>
<accession>B7MBS5</accession>
<organism>
    <name type="scientific">Escherichia coli O45:K1 (strain S88 / ExPEC)</name>
    <dbReference type="NCBI Taxonomy" id="585035"/>
    <lineage>
        <taxon>Bacteria</taxon>
        <taxon>Pseudomonadati</taxon>
        <taxon>Pseudomonadota</taxon>
        <taxon>Gammaproteobacteria</taxon>
        <taxon>Enterobacterales</taxon>
        <taxon>Enterobacteriaceae</taxon>
        <taxon>Escherichia</taxon>
    </lineage>
</organism>
<reference key="1">
    <citation type="journal article" date="2009" name="PLoS Genet.">
        <title>Organised genome dynamics in the Escherichia coli species results in highly diverse adaptive paths.</title>
        <authorList>
            <person name="Touchon M."/>
            <person name="Hoede C."/>
            <person name="Tenaillon O."/>
            <person name="Barbe V."/>
            <person name="Baeriswyl S."/>
            <person name="Bidet P."/>
            <person name="Bingen E."/>
            <person name="Bonacorsi S."/>
            <person name="Bouchier C."/>
            <person name="Bouvet O."/>
            <person name="Calteau A."/>
            <person name="Chiapello H."/>
            <person name="Clermont O."/>
            <person name="Cruveiller S."/>
            <person name="Danchin A."/>
            <person name="Diard M."/>
            <person name="Dossat C."/>
            <person name="Karoui M.E."/>
            <person name="Frapy E."/>
            <person name="Garry L."/>
            <person name="Ghigo J.M."/>
            <person name="Gilles A.M."/>
            <person name="Johnson J."/>
            <person name="Le Bouguenec C."/>
            <person name="Lescat M."/>
            <person name="Mangenot S."/>
            <person name="Martinez-Jehanne V."/>
            <person name="Matic I."/>
            <person name="Nassif X."/>
            <person name="Oztas S."/>
            <person name="Petit M.A."/>
            <person name="Pichon C."/>
            <person name="Rouy Z."/>
            <person name="Ruf C.S."/>
            <person name="Schneider D."/>
            <person name="Tourret J."/>
            <person name="Vacherie B."/>
            <person name="Vallenet D."/>
            <person name="Medigue C."/>
            <person name="Rocha E.P.C."/>
            <person name="Denamur E."/>
        </authorList>
    </citation>
    <scope>NUCLEOTIDE SEQUENCE [LARGE SCALE GENOMIC DNA]</scope>
    <source>
        <strain>S88 / ExPEC</strain>
    </source>
</reference>
<feature type="chain" id="PRO_1000198986" description="Aspartate--tRNA ligase">
    <location>
        <begin position="1"/>
        <end position="590"/>
    </location>
</feature>
<feature type="region of interest" description="Aspartate" evidence="1">
    <location>
        <begin position="195"/>
        <end position="198"/>
    </location>
</feature>
<feature type="binding site" evidence="1">
    <location>
        <position position="171"/>
    </location>
    <ligand>
        <name>L-aspartate</name>
        <dbReference type="ChEBI" id="CHEBI:29991"/>
    </ligand>
</feature>
<feature type="binding site" evidence="1">
    <location>
        <begin position="217"/>
        <end position="219"/>
    </location>
    <ligand>
        <name>ATP</name>
        <dbReference type="ChEBI" id="CHEBI:30616"/>
    </ligand>
</feature>
<feature type="binding site" evidence="1">
    <location>
        <position position="217"/>
    </location>
    <ligand>
        <name>L-aspartate</name>
        <dbReference type="ChEBI" id="CHEBI:29991"/>
    </ligand>
</feature>
<feature type="binding site" evidence="1">
    <location>
        <position position="226"/>
    </location>
    <ligand>
        <name>ATP</name>
        <dbReference type="ChEBI" id="CHEBI:30616"/>
    </ligand>
</feature>
<feature type="binding site" evidence="1">
    <location>
        <position position="448"/>
    </location>
    <ligand>
        <name>L-aspartate</name>
        <dbReference type="ChEBI" id="CHEBI:29991"/>
    </ligand>
</feature>
<feature type="binding site" evidence="1">
    <location>
        <position position="482"/>
    </location>
    <ligand>
        <name>ATP</name>
        <dbReference type="ChEBI" id="CHEBI:30616"/>
    </ligand>
</feature>
<feature type="binding site" evidence="1">
    <location>
        <position position="489"/>
    </location>
    <ligand>
        <name>L-aspartate</name>
        <dbReference type="ChEBI" id="CHEBI:29991"/>
    </ligand>
</feature>
<feature type="binding site" evidence="1">
    <location>
        <begin position="534"/>
        <end position="537"/>
    </location>
    <ligand>
        <name>ATP</name>
        <dbReference type="ChEBI" id="CHEBI:30616"/>
    </ligand>
</feature>